<keyword id="KW-0479">Metal-binding</keyword>
<keyword id="KW-0862">Zinc</keyword>
<name>YACG_LEGPC</name>
<comment type="function">
    <text evidence="1">Inhibits all the catalytic activities of DNA gyrase by preventing its interaction with DNA. Acts by binding directly to the C-terminal domain of GyrB, which probably disrupts DNA binding by the gyrase.</text>
</comment>
<comment type="cofactor">
    <cofactor evidence="1">
        <name>Zn(2+)</name>
        <dbReference type="ChEBI" id="CHEBI:29105"/>
    </cofactor>
    <text evidence="1">Binds 1 zinc ion.</text>
</comment>
<comment type="subunit">
    <text evidence="1">Interacts with GyrB.</text>
</comment>
<comment type="similarity">
    <text evidence="1">Belongs to the DNA gyrase inhibitor YacG family.</text>
</comment>
<dbReference type="EMBL" id="CP000675">
    <property type="protein sequence ID" value="ABQ54287.1"/>
    <property type="molecule type" value="Genomic_DNA"/>
</dbReference>
<dbReference type="RefSeq" id="WP_011945459.1">
    <property type="nucleotide sequence ID" value="NZ_JAPMSS010000003.1"/>
</dbReference>
<dbReference type="SMR" id="A5IA87"/>
<dbReference type="KEGG" id="lpc:LPC_0292"/>
<dbReference type="HOGENOM" id="CLU_178280_1_0_6"/>
<dbReference type="GO" id="GO:0008657">
    <property type="term" value="F:DNA topoisomerase type II (double strand cut, ATP-hydrolyzing) inhibitor activity"/>
    <property type="evidence" value="ECO:0007669"/>
    <property type="project" value="UniProtKB-UniRule"/>
</dbReference>
<dbReference type="GO" id="GO:0008270">
    <property type="term" value="F:zinc ion binding"/>
    <property type="evidence" value="ECO:0007669"/>
    <property type="project" value="UniProtKB-UniRule"/>
</dbReference>
<dbReference type="GO" id="GO:0006355">
    <property type="term" value="P:regulation of DNA-templated transcription"/>
    <property type="evidence" value="ECO:0007669"/>
    <property type="project" value="InterPro"/>
</dbReference>
<dbReference type="Gene3D" id="3.30.50.10">
    <property type="entry name" value="Erythroid Transcription Factor GATA-1, subunit A"/>
    <property type="match status" value="1"/>
</dbReference>
<dbReference type="HAMAP" id="MF_00649">
    <property type="entry name" value="DNA_gyrase_inhibitor_YacG"/>
    <property type="match status" value="1"/>
</dbReference>
<dbReference type="InterPro" id="IPR005584">
    <property type="entry name" value="DNA_gyrase_inhibitor_YacG"/>
</dbReference>
<dbReference type="InterPro" id="IPR013088">
    <property type="entry name" value="Znf_NHR/GATA"/>
</dbReference>
<dbReference type="NCBIfam" id="NF001638">
    <property type="entry name" value="PRK00418.1"/>
    <property type="match status" value="1"/>
</dbReference>
<dbReference type="PANTHER" id="PTHR36150">
    <property type="entry name" value="DNA GYRASE INHIBITOR YACG"/>
    <property type="match status" value="1"/>
</dbReference>
<dbReference type="PANTHER" id="PTHR36150:SF1">
    <property type="entry name" value="DNA GYRASE INHIBITOR YACG"/>
    <property type="match status" value="1"/>
</dbReference>
<dbReference type="Pfam" id="PF03884">
    <property type="entry name" value="YacG"/>
    <property type="match status" value="1"/>
</dbReference>
<dbReference type="SUPFAM" id="SSF57716">
    <property type="entry name" value="Glucocorticoid receptor-like (DNA-binding domain)"/>
    <property type="match status" value="1"/>
</dbReference>
<gene>
    <name evidence="1" type="primary">yacG</name>
    <name type="ordered locus">LPC_0292</name>
</gene>
<proteinExistence type="inferred from homology"/>
<accession>A5IA87</accession>
<reference key="1">
    <citation type="submission" date="2006-11" db="EMBL/GenBank/DDBJ databases">
        <title>Identification and characterization of a new conjugation/ type IVA secretion system (trb/tra) of L. pneumophila Corby localized on a mobile genomic island.</title>
        <authorList>
            <person name="Gloeckner G."/>
            <person name="Albert-Weissenberger C."/>
            <person name="Weinmann E."/>
            <person name="Jacobi S."/>
            <person name="Schunder E."/>
            <person name="Steinert M."/>
            <person name="Buchrieser C."/>
            <person name="Hacker J."/>
            <person name="Heuner K."/>
        </authorList>
    </citation>
    <scope>NUCLEOTIDE SEQUENCE [LARGE SCALE GENOMIC DNA]</scope>
    <source>
        <strain>Corby</strain>
    </source>
</reference>
<feature type="chain" id="PRO_1000056978" description="DNA gyrase inhibitor YacG">
    <location>
        <begin position="1"/>
        <end position="70"/>
    </location>
</feature>
<feature type="region of interest" description="Disordered" evidence="2">
    <location>
        <begin position="43"/>
        <end position="70"/>
    </location>
</feature>
<feature type="binding site" evidence="1">
    <location>
        <position position="9"/>
    </location>
    <ligand>
        <name>Zn(2+)</name>
        <dbReference type="ChEBI" id="CHEBI:29105"/>
    </ligand>
</feature>
<feature type="binding site" evidence="1">
    <location>
        <position position="12"/>
    </location>
    <ligand>
        <name>Zn(2+)</name>
        <dbReference type="ChEBI" id="CHEBI:29105"/>
    </ligand>
</feature>
<feature type="binding site" evidence="1">
    <location>
        <position position="28"/>
    </location>
    <ligand>
        <name>Zn(2+)</name>
        <dbReference type="ChEBI" id="CHEBI:29105"/>
    </ligand>
</feature>
<feature type="binding site" evidence="1">
    <location>
        <position position="32"/>
    </location>
    <ligand>
        <name>Zn(2+)</name>
        <dbReference type="ChEBI" id="CHEBI:29105"/>
    </ligand>
</feature>
<sequence length="70" mass="8068">MNNQKKIKCPICGKQNTWRPDNQFRPFCSERCKLIDLGEWASESRKIPGSSIDPESIVTTNNKQDNVDEQ</sequence>
<protein>
    <recommendedName>
        <fullName evidence="1">DNA gyrase inhibitor YacG</fullName>
    </recommendedName>
</protein>
<organism>
    <name type="scientific">Legionella pneumophila (strain Corby)</name>
    <dbReference type="NCBI Taxonomy" id="400673"/>
    <lineage>
        <taxon>Bacteria</taxon>
        <taxon>Pseudomonadati</taxon>
        <taxon>Pseudomonadota</taxon>
        <taxon>Gammaproteobacteria</taxon>
        <taxon>Legionellales</taxon>
        <taxon>Legionellaceae</taxon>
        <taxon>Legionella</taxon>
    </lineage>
</organism>
<evidence type="ECO:0000255" key="1">
    <source>
        <dbReference type="HAMAP-Rule" id="MF_00649"/>
    </source>
</evidence>
<evidence type="ECO:0000256" key="2">
    <source>
        <dbReference type="SAM" id="MobiDB-lite"/>
    </source>
</evidence>